<protein>
    <recommendedName>
        <fullName evidence="8">Tubulin polymerization-promoting protein family member 3</fullName>
    </recommendedName>
    <alternativeName>
        <fullName evidence="7">TPPP/p20</fullName>
    </alternativeName>
</protein>
<name>TPPP3_HUMAN</name>
<comment type="function">
    <text evidence="1 3 4 5">Regulator of microtubule dynamic that has microtubule bundling activity (PubMed:17105200, PubMed:19633818). Required for embryo implantation; possibly by regulating beta-catenin (By similarity). Also required for decidualization via regulation of beta-catenin (PubMed:30667362).</text>
</comment>
<comment type="subcellular location">
    <subcellularLocation>
        <location evidence="5">Cytoplasm</location>
    </subcellularLocation>
    <subcellularLocation>
        <location evidence="10">Cytoplasm</location>
        <location evidence="10">Cytoskeleton</location>
    </subcellularLocation>
</comment>
<comment type="tissue specificity">
    <text evidence="5">Expressed in endometrium during the mid-secretory phase (LH + 7) (at protein level).</text>
</comment>
<comment type="similarity">
    <text evidence="9">Belongs to the TPPP family.</text>
</comment>
<comment type="sequence caution" evidence="9">
    <conflict type="frameshift">
        <sequence resource="EMBL-CDS" id="AAD44478"/>
    </conflict>
</comment>
<proteinExistence type="evidence at protein level"/>
<reference key="1">
    <citation type="journal article" date="2000" name="Genome Res.">
        <title>Identification of novel human genes evolutionarily conserved in Caenorhabditis elegans by comparative proteomics.</title>
        <authorList>
            <person name="Lai C.-H."/>
            <person name="Chou C.-Y."/>
            <person name="Ch'ang L.-Y."/>
            <person name="Liu C.-S."/>
            <person name="Lin W.-C."/>
        </authorList>
    </citation>
    <scope>NUCLEOTIDE SEQUENCE [LARGE SCALE MRNA]</scope>
</reference>
<reference key="2">
    <citation type="journal article" date="2000" name="Proc. Natl. Acad. Sci. U.S.A.">
        <title>Gene expression profiling in the human hypothalamus-pituitary-adrenal axis and full-length cDNA cloning.</title>
        <authorList>
            <person name="Hu R.-M."/>
            <person name="Han Z.-G."/>
            <person name="Song H.-D."/>
            <person name="Peng Y.-D."/>
            <person name="Huang Q.-H."/>
            <person name="Ren S.-X."/>
            <person name="Gu Y.-J."/>
            <person name="Huang C.-H."/>
            <person name="Li Y.-B."/>
            <person name="Jiang C.-L."/>
            <person name="Fu G."/>
            <person name="Zhang Q.-H."/>
            <person name="Gu B.-W."/>
            <person name="Dai M."/>
            <person name="Mao Y.-F."/>
            <person name="Gao G.-F."/>
            <person name="Rong R."/>
            <person name="Ye M."/>
            <person name="Zhou J."/>
            <person name="Xu S.-H."/>
            <person name="Gu J."/>
            <person name="Shi J.-X."/>
            <person name="Jin W.-R."/>
            <person name="Zhang C.-K."/>
            <person name="Wu T.-M."/>
            <person name="Huang G.-Y."/>
            <person name="Chen Z."/>
            <person name="Chen M.-D."/>
            <person name="Chen J.-L."/>
        </authorList>
    </citation>
    <scope>NUCLEOTIDE SEQUENCE [LARGE SCALE MRNA]</scope>
    <source>
        <tissue>Pituitary</tissue>
    </source>
</reference>
<reference key="3">
    <citation type="journal article" date="2004" name="Genome Res.">
        <title>The status, quality, and expansion of the NIH full-length cDNA project: the Mammalian Gene Collection (MGC).</title>
        <authorList>
            <consortium name="The MGC Project Team"/>
        </authorList>
    </citation>
    <scope>NUCLEOTIDE SEQUENCE [LARGE SCALE MRNA]</scope>
    <source>
        <tissue>Eye</tissue>
    </source>
</reference>
<reference key="4">
    <citation type="journal article" date="2006" name="Biochemistry">
        <title>Tubulin polymerization promoting proteins (TPPPs): members of a new family with distinct structures and functions.</title>
        <authorList>
            <person name="Vincze O."/>
            <person name="Toekesi N."/>
            <person name="Olah J."/>
            <person name="Hlavanda E."/>
            <person name="Zotter A."/>
            <person name="Horvath I."/>
            <person name="Lehotzky A."/>
            <person name="Tirian L."/>
            <person name="Medzihradszky K.F."/>
            <person name="Kovacs J."/>
            <person name="Orosz F."/>
            <person name="Ovadi J."/>
        </authorList>
    </citation>
    <scope>FUNCTION</scope>
    <scope>SUBCELLULAR LOCATION</scope>
</reference>
<reference key="5">
    <citation type="journal article" date="2010" name="Mol. Cell. Biochem.">
        <title>Depletion of tubulin polymerization promoting protein family member 3 suppresses HeLa cell proliferation.</title>
        <authorList>
            <person name="Zhou W."/>
            <person name="Wang X."/>
            <person name="Li L."/>
            <person name="Feng X."/>
            <person name="Yang Z."/>
            <person name="Zhang W."/>
            <person name="Hu R."/>
        </authorList>
    </citation>
    <scope>FUNCTION</scope>
</reference>
<reference key="6">
    <citation type="journal article" date="2012" name="Proc. Natl. Acad. Sci. U.S.A.">
        <title>N-terminal acetylome analyses and functional insights of the N-terminal acetyltransferase NatB.</title>
        <authorList>
            <person name="Van Damme P."/>
            <person name="Lasa M."/>
            <person name="Polevoda B."/>
            <person name="Gazquez C."/>
            <person name="Elosegui-Artola A."/>
            <person name="Kim D.S."/>
            <person name="De Juan-Pardo E."/>
            <person name="Demeyer K."/>
            <person name="Hole K."/>
            <person name="Larrea E."/>
            <person name="Timmerman E."/>
            <person name="Prieto J."/>
            <person name="Arnesen T."/>
            <person name="Sherman F."/>
            <person name="Gevaert K."/>
            <person name="Aldabe R."/>
        </authorList>
    </citation>
    <scope>ACETYLATION [LARGE SCALE ANALYSIS] AT ALA-2</scope>
    <scope>CLEAVAGE OF INITIATOR METHIONINE [LARGE SCALE ANALYSIS]</scope>
    <scope>IDENTIFICATION BY MASS SPECTROMETRY [LARGE SCALE ANALYSIS]</scope>
</reference>
<reference key="7">
    <citation type="journal article" date="2019" name="J. Endocrinol.">
        <title>Inhibition of TPPP3 attenuates beta-catenin/NF-kappaB/COX-2 signaling in endometrial stromal cells and impairs decidualization.</title>
        <authorList>
            <person name="Shukla V."/>
            <person name="Kaushal J.B."/>
            <person name="Sankhwar P."/>
            <person name="Manohar M."/>
            <person name="Dwivedi A."/>
        </authorList>
    </citation>
    <scope>FUNCTION</scope>
    <scope>SUBCELLULAR LOCATION</scope>
    <scope>TISSUE SPECIFICITY</scope>
</reference>
<reference key="8">
    <citation type="submission" date="2009-02" db="PDB data bank">
        <title>Solution NMR structure of tubulin polymerization-promoting protein family member 3 from Homo sapiens.</title>
        <authorList>
            <consortium name="Northeast structural genomics consortium (NESG)"/>
        </authorList>
    </citation>
    <scope>STRUCTURE BY NMR</scope>
</reference>
<gene>
    <name evidence="8 11" type="primary">TPPP3</name>
    <name evidence="6" type="ORF">CGI-38</name>
</gene>
<keyword id="KW-0002">3D-structure</keyword>
<keyword id="KW-0007">Acetylation</keyword>
<keyword id="KW-0963">Cytoplasm</keyword>
<keyword id="KW-0206">Cytoskeleton</keyword>
<keyword id="KW-0493">Microtubule</keyword>
<keyword id="KW-1267">Proteomics identification</keyword>
<keyword id="KW-1185">Reference proteome</keyword>
<feature type="initiator methionine" description="Removed" evidence="12">
    <location>
        <position position="1"/>
    </location>
</feature>
<feature type="chain" id="PRO_0000221138" description="Tubulin polymerization-promoting protein family member 3">
    <location>
        <begin position="2"/>
        <end position="176"/>
    </location>
</feature>
<feature type="region of interest" description="Disordered" evidence="2">
    <location>
        <begin position="132"/>
        <end position="152"/>
    </location>
</feature>
<feature type="compositionally biased region" description="Basic and acidic residues" evidence="2">
    <location>
        <begin position="134"/>
        <end position="144"/>
    </location>
</feature>
<feature type="modified residue" description="N-acetylalanine" evidence="12">
    <location>
        <position position="2"/>
    </location>
</feature>
<feature type="sequence conflict" description="In Ref. 2; AAD44478." evidence="9" ref="2">
    <original>M</original>
    <variation>I</variation>
    <location>
        <position position="7"/>
    </location>
</feature>
<feature type="sequence conflict" description="In Ref. 2; AAD44478." evidence="9" ref="2">
    <original>LE</original>
    <variation>PK</variation>
    <location>
        <begin position="10"/>
        <end position="11"/>
    </location>
</feature>
<feature type="sequence conflict" description="In Ref. 2; AAD44478." evidence="9" ref="2">
    <original>GTD</original>
    <variation>TP</variation>
    <location>
        <begin position="52"/>
        <end position="54"/>
    </location>
</feature>
<feature type="sequence conflict" description="In Ref. 2; AAD44478." evidence="9" ref="2">
    <original>K</original>
    <variation>G</variation>
    <location>
        <position position="88"/>
    </location>
</feature>
<feature type="sequence conflict" description="In Ref. 1; AAD27747." evidence="9" ref="1">
    <original>K</original>
    <variation>Q</variation>
    <location>
        <position position="88"/>
    </location>
</feature>
<feature type="strand" evidence="13">
    <location>
        <begin position="3"/>
        <end position="6"/>
    </location>
</feature>
<feature type="helix" evidence="13">
    <location>
        <begin position="9"/>
        <end position="18"/>
    </location>
</feature>
<feature type="strand" evidence="13">
    <location>
        <begin position="19"/>
        <end position="21"/>
    </location>
</feature>
<feature type="strand" evidence="13">
    <location>
        <begin position="28"/>
        <end position="31"/>
    </location>
</feature>
<feature type="helix" evidence="13">
    <location>
        <begin position="32"/>
        <end position="41"/>
    </location>
</feature>
<feature type="strand" evidence="13">
    <location>
        <begin position="47"/>
        <end position="50"/>
    </location>
</feature>
<feature type="helix" evidence="13">
    <location>
        <begin position="52"/>
        <end position="62"/>
    </location>
</feature>
<feature type="strand" evidence="13">
    <location>
        <begin position="68"/>
        <end position="71"/>
    </location>
</feature>
<feature type="helix" evidence="13">
    <location>
        <begin position="72"/>
        <end position="86"/>
    </location>
</feature>
<feature type="helix" evidence="13">
    <location>
        <begin position="92"/>
        <end position="101"/>
    </location>
</feature>
<feature type="turn" evidence="13">
    <location>
        <begin position="102"/>
        <end position="105"/>
    </location>
</feature>
<feature type="strand" evidence="13">
    <location>
        <begin position="108"/>
        <end position="112"/>
    </location>
</feature>
<feature type="strand" evidence="13">
    <location>
        <begin position="126"/>
        <end position="129"/>
    </location>
</feature>
<feature type="strand" evidence="13">
    <location>
        <begin position="141"/>
        <end position="143"/>
    </location>
</feature>
<feature type="turn" evidence="13">
    <location>
        <begin position="146"/>
        <end position="150"/>
    </location>
</feature>
<sequence length="176" mass="18985">MAASTDMAGLEESFRKFAIHGDPKASGQEMNGKNWAKLCKDCKVADGKSVTGTDVDIVFSKVKGKSARVINYEEFKKALEELATKRFKGKSKEEAFDAICQLVAGKEPANVGVTKAKTGGAVDRLTDTSRYTGSHKERFDESGKGKGIAGRQDILDDSGYVSAYKNAGTYDAKVKK</sequence>
<accession>Q9BW30</accession>
<accession>Q49AH9</accession>
<accession>Q9Y326</accession>
<accession>Q9Y6H0</accession>
<dbReference type="EMBL" id="AF132972">
    <property type="protein sequence ID" value="AAD27747.1"/>
    <property type="molecule type" value="mRNA"/>
</dbReference>
<dbReference type="EMBL" id="AF078846">
    <property type="protein sequence ID" value="AAD44478.1"/>
    <property type="status" value="ALT_FRAME"/>
    <property type="molecule type" value="mRNA"/>
</dbReference>
<dbReference type="EMBL" id="BC000691">
    <property type="protein sequence ID" value="AAH00691.1"/>
    <property type="molecule type" value="mRNA"/>
</dbReference>
<dbReference type="CCDS" id="CCDS10835.1"/>
<dbReference type="RefSeq" id="NP_057048.2">
    <property type="nucleotide sequence ID" value="NM_015964.4"/>
</dbReference>
<dbReference type="RefSeq" id="NP_057224.2">
    <property type="nucleotide sequence ID" value="NM_016140.4"/>
</dbReference>
<dbReference type="RefSeq" id="XP_024306062.1">
    <property type="nucleotide sequence ID" value="XM_024450294.2"/>
</dbReference>
<dbReference type="PDB" id="2JRF">
    <property type="method" value="NMR"/>
    <property type="chains" value="A=1-176"/>
</dbReference>
<dbReference type="PDBsum" id="2JRF"/>
<dbReference type="BMRB" id="Q9BW30"/>
<dbReference type="SMR" id="Q9BW30"/>
<dbReference type="BioGRID" id="119673">
    <property type="interactions" value="10"/>
</dbReference>
<dbReference type="FunCoup" id="Q9BW30">
    <property type="interactions" value="91"/>
</dbReference>
<dbReference type="IntAct" id="Q9BW30">
    <property type="interactions" value="5"/>
</dbReference>
<dbReference type="STRING" id="9606.ENSP00000462435"/>
<dbReference type="GlyCosmos" id="Q9BW30">
    <property type="glycosylation" value="1 site, 1 glycan"/>
</dbReference>
<dbReference type="GlyGen" id="Q9BW30">
    <property type="glycosylation" value="1 site, 1 O-linked glycan (1 site)"/>
</dbReference>
<dbReference type="iPTMnet" id="Q9BW30"/>
<dbReference type="PhosphoSitePlus" id="Q9BW30"/>
<dbReference type="BioMuta" id="TPPP3"/>
<dbReference type="DMDM" id="28380040"/>
<dbReference type="jPOST" id="Q9BW30"/>
<dbReference type="MassIVE" id="Q9BW30"/>
<dbReference type="PaxDb" id="9606-ENSP00000462435"/>
<dbReference type="PeptideAtlas" id="Q9BW30"/>
<dbReference type="ProteomicsDB" id="79252"/>
<dbReference type="Pumba" id="Q9BW30"/>
<dbReference type="Antibodypedia" id="29534">
    <property type="antibodies" value="194 antibodies from 26 providers"/>
</dbReference>
<dbReference type="DNASU" id="51673"/>
<dbReference type="Ensembl" id="ENST00000290942.9">
    <property type="protein sequence ID" value="ENSP00000290942.5"/>
    <property type="gene ID" value="ENSG00000159713.11"/>
</dbReference>
<dbReference type="Ensembl" id="ENST00000393957.7">
    <property type="protein sequence ID" value="ENSP00000377529.2"/>
    <property type="gene ID" value="ENSG00000159713.11"/>
</dbReference>
<dbReference type="Ensembl" id="ENST00000562206.1">
    <property type="protein sequence ID" value="ENSP00000457275.1"/>
    <property type="gene ID" value="ENSG00000159713.11"/>
</dbReference>
<dbReference type="Ensembl" id="ENST00000564104.5">
    <property type="protein sequence ID" value="ENSP00000462435.1"/>
    <property type="gene ID" value="ENSG00000159713.11"/>
</dbReference>
<dbReference type="GeneID" id="51673"/>
<dbReference type="KEGG" id="hsa:51673"/>
<dbReference type="MANE-Select" id="ENST00000393957.7">
    <property type="protein sequence ID" value="ENSP00000377529.2"/>
    <property type="RefSeq nucleotide sequence ID" value="NM_015964.4"/>
    <property type="RefSeq protein sequence ID" value="NP_057048.2"/>
</dbReference>
<dbReference type="UCSC" id="uc002esz.5">
    <property type="organism name" value="human"/>
</dbReference>
<dbReference type="AGR" id="HGNC:24162"/>
<dbReference type="CTD" id="51673"/>
<dbReference type="DisGeNET" id="51673"/>
<dbReference type="GeneCards" id="TPPP3"/>
<dbReference type="HGNC" id="HGNC:24162">
    <property type="gene designation" value="TPPP3"/>
</dbReference>
<dbReference type="HPA" id="ENSG00000159713">
    <property type="expression patterns" value="Tissue enhanced (fallopian)"/>
</dbReference>
<dbReference type="MIM" id="616957">
    <property type="type" value="gene"/>
</dbReference>
<dbReference type="neXtProt" id="NX_Q9BW30"/>
<dbReference type="OpenTargets" id="ENSG00000159713"/>
<dbReference type="PharmGKB" id="PA162406823"/>
<dbReference type="VEuPathDB" id="HostDB:ENSG00000159713"/>
<dbReference type="eggNOG" id="KOG4070">
    <property type="taxonomic scope" value="Eukaryota"/>
</dbReference>
<dbReference type="GeneTree" id="ENSGT00940000153875"/>
<dbReference type="HOGENOM" id="CLU_091734_0_0_1"/>
<dbReference type="InParanoid" id="Q9BW30"/>
<dbReference type="OMA" id="EAFNSIC"/>
<dbReference type="OrthoDB" id="548799at2759"/>
<dbReference type="PAN-GO" id="Q9BW30">
    <property type="GO annotations" value="5 GO annotations based on evolutionary models"/>
</dbReference>
<dbReference type="PhylomeDB" id="Q9BW30"/>
<dbReference type="TreeFam" id="TF314440"/>
<dbReference type="PathwayCommons" id="Q9BW30"/>
<dbReference type="SignaLink" id="Q9BW30"/>
<dbReference type="BioGRID-ORCS" id="51673">
    <property type="hits" value="11 hits in 1139 CRISPR screens"/>
</dbReference>
<dbReference type="ChiTaRS" id="TPPP3">
    <property type="organism name" value="human"/>
</dbReference>
<dbReference type="EvolutionaryTrace" id="Q9BW30"/>
<dbReference type="GenomeRNAi" id="51673"/>
<dbReference type="Pharos" id="Q9BW30">
    <property type="development level" value="Tbio"/>
</dbReference>
<dbReference type="PRO" id="PR:Q9BW30"/>
<dbReference type="Proteomes" id="UP000005640">
    <property type="component" value="Chromosome 16"/>
</dbReference>
<dbReference type="RNAct" id="Q9BW30">
    <property type="molecule type" value="protein"/>
</dbReference>
<dbReference type="Bgee" id="ENSG00000159713">
    <property type="expression patterns" value="Expressed in right uterine tube and 100 other cell types or tissues"/>
</dbReference>
<dbReference type="ExpressionAtlas" id="Q9BW30">
    <property type="expression patterns" value="baseline and differential"/>
</dbReference>
<dbReference type="GO" id="GO:0005737">
    <property type="term" value="C:cytoplasm"/>
    <property type="evidence" value="ECO:0007669"/>
    <property type="project" value="UniProtKB-SubCell"/>
</dbReference>
<dbReference type="GO" id="GO:0005874">
    <property type="term" value="C:microtubule"/>
    <property type="evidence" value="ECO:0007669"/>
    <property type="project" value="UniProtKB-KW"/>
</dbReference>
<dbReference type="GO" id="GO:0015631">
    <property type="term" value="F:tubulin binding"/>
    <property type="evidence" value="ECO:0000314"/>
    <property type="project" value="UniProtKB"/>
</dbReference>
<dbReference type="GO" id="GO:0046697">
    <property type="term" value="P:decidualization"/>
    <property type="evidence" value="ECO:0000315"/>
    <property type="project" value="UniProtKB"/>
</dbReference>
<dbReference type="GO" id="GO:0007566">
    <property type="term" value="P:embryo implantation"/>
    <property type="evidence" value="ECO:0000250"/>
    <property type="project" value="UniProtKB"/>
</dbReference>
<dbReference type="GO" id="GO:0001578">
    <property type="term" value="P:microtubule bundle formation"/>
    <property type="evidence" value="ECO:0000314"/>
    <property type="project" value="UniProtKB"/>
</dbReference>
<dbReference type="GO" id="GO:0046785">
    <property type="term" value="P:microtubule polymerization"/>
    <property type="evidence" value="ECO:0000318"/>
    <property type="project" value="GO_Central"/>
</dbReference>
<dbReference type="GO" id="GO:0032273">
    <property type="term" value="P:positive regulation of protein polymerization"/>
    <property type="evidence" value="ECO:0000318"/>
    <property type="project" value="GO_Central"/>
</dbReference>
<dbReference type="FunFam" id="1.10.238.10:FF:000057">
    <property type="entry name" value="Tubulin polymerization-promoting protein family member 3"/>
    <property type="match status" value="1"/>
</dbReference>
<dbReference type="Gene3D" id="1.10.238.10">
    <property type="entry name" value="EF-hand"/>
    <property type="match status" value="1"/>
</dbReference>
<dbReference type="InterPro" id="IPR011992">
    <property type="entry name" value="EF-hand-dom_pair"/>
</dbReference>
<dbReference type="InterPro" id="IPR008907">
    <property type="entry name" value="TPP/p25"/>
</dbReference>
<dbReference type="PANTHER" id="PTHR12932">
    <property type="entry name" value="P25 ALPHA-RELATED"/>
    <property type="match status" value="1"/>
</dbReference>
<dbReference type="PANTHER" id="PTHR12932:SF16">
    <property type="entry name" value="TUBULIN POLYMERIZATION-PROMOTING PROTEIN FAMILY MEMBER 3"/>
    <property type="match status" value="1"/>
</dbReference>
<dbReference type="Pfam" id="PF05517">
    <property type="entry name" value="p25-alpha"/>
    <property type="match status" value="1"/>
</dbReference>
<dbReference type="SUPFAM" id="SSF47473">
    <property type="entry name" value="EF-hand"/>
    <property type="match status" value="1"/>
</dbReference>
<evidence type="ECO:0000250" key="1">
    <source>
        <dbReference type="UniProtKB" id="Q9CRB6"/>
    </source>
</evidence>
<evidence type="ECO:0000256" key="2">
    <source>
        <dbReference type="SAM" id="MobiDB-lite"/>
    </source>
</evidence>
<evidence type="ECO:0000269" key="3">
    <source>
    </source>
</evidence>
<evidence type="ECO:0000269" key="4">
    <source>
    </source>
</evidence>
<evidence type="ECO:0000269" key="5">
    <source>
    </source>
</evidence>
<evidence type="ECO:0000303" key="6">
    <source>
    </source>
</evidence>
<evidence type="ECO:0000303" key="7">
    <source>
    </source>
</evidence>
<evidence type="ECO:0000303" key="8">
    <source>
    </source>
</evidence>
<evidence type="ECO:0000305" key="9"/>
<evidence type="ECO:0000305" key="10">
    <source>
    </source>
</evidence>
<evidence type="ECO:0000312" key="11">
    <source>
        <dbReference type="HGNC" id="HGNC:24162"/>
    </source>
</evidence>
<evidence type="ECO:0007744" key="12">
    <source>
    </source>
</evidence>
<evidence type="ECO:0007829" key="13">
    <source>
        <dbReference type="PDB" id="2JRF"/>
    </source>
</evidence>
<organism>
    <name type="scientific">Homo sapiens</name>
    <name type="common">Human</name>
    <dbReference type="NCBI Taxonomy" id="9606"/>
    <lineage>
        <taxon>Eukaryota</taxon>
        <taxon>Metazoa</taxon>
        <taxon>Chordata</taxon>
        <taxon>Craniata</taxon>
        <taxon>Vertebrata</taxon>
        <taxon>Euteleostomi</taxon>
        <taxon>Mammalia</taxon>
        <taxon>Eutheria</taxon>
        <taxon>Euarchontoglires</taxon>
        <taxon>Primates</taxon>
        <taxon>Haplorrhini</taxon>
        <taxon>Catarrhini</taxon>
        <taxon>Hominidae</taxon>
        <taxon>Homo</taxon>
    </lineage>
</organism>